<feature type="chain" id="PRO_0000368716" description="ATP synthase subunit b 1">
    <location>
        <begin position="1"/>
        <end position="156"/>
    </location>
</feature>
<feature type="transmembrane region" description="Helical" evidence="1">
    <location>
        <begin position="7"/>
        <end position="27"/>
    </location>
</feature>
<name>ATPF1_ALBFT</name>
<gene>
    <name evidence="1" type="primary">atpF1</name>
    <name type="ordered locus">Rfer_0110</name>
</gene>
<accession>Q223D2</accession>
<dbReference type="EMBL" id="CP000267">
    <property type="protein sequence ID" value="ABD67871.1"/>
    <property type="molecule type" value="Genomic_DNA"/>
</dbReference>
<dbReference type="RefSeq" id="WP_011462444.1">
    <property type="nucleotide sequence ID" value="NC_007908.1"/>
</dbReference>
<dbReference type="SMR" id="Q223D2"/>
<dbReference type="STRING" id="338969.Rfer_0110"/>
<dbReference type="KEGG" id="rfr:Rfer_0110"/>
<dbReference type="eggNOG" id="COG0711">
    <property type="taxonomic scope" value="Bacteria"/>
</dbReference>
<dbReference type="HOGENOM" id="CLU_079215_4_5_4"/>
<dbReference type="OrthoDB" id="9788020at2"/>
<dbReference type="Proteomes" id="UP000008332">
    <property type="component" value="Chromosome"/>
</dbReference>
<dbReference type="GO" id="GO:0005886">
    <property type="term" value="C:plasma membrane"/>
    <property type="evidence" value="ECO:0007669"/>
    <property type="project" value="UniProtKB-SubCell"/>
</dbReference>
<dbReference type="GO" id="GO:0045259">
    <property type="term" value="C:proton-transporting ATP synthase complex"/>
    <property type="evidence" value="ECO:0007669"/>
    <property type="project" value="UniProtKB-KW"/>
</dbReference>
<dbReference type="GO" id="GO:0046933">
    <property type="term" value="F:proton-transporting ATP synthase activity, rotational mechanism"/>
    <property type="evidence" value="ECO:0007669"/>
    <property type="project" value="UniProtKB-UniRule"/>
</dbReference>
<dbReference type="GO" id="GO:0046961">
    <property type="term" value="F:proton-transporting ATPase activity, rotational mechanism"/>
    <property type="evidence" value="ECO:0007669"/>
    <property type="project" value="TreeGrafter"/>
</dbReference>
<dbReference type="CDD" id="cd06503">
    <property type="entry name" value="ATP-synt_Fo_b"/>
    <property type="match status" value="1"/>
</dbReference>
<dbReference type="Gene3D" id="1.20.5.620">
    <property type="entry name" value="F1F0 ATP synthase subunit B, membrane domain"/>
    <property type="match status" value="1"/>
</dbReference>
<dbReference type="HAMAP" id="MF_01398">
    <property type="entry name" value="ATP_synth_b_bprime"/>
    <property type="match status" value="1"/>
</dbReference>
<dbReference type="InterPro" id="IPR028987">
    <property type="entry name" value="ATP_synth_B-like_membr_sf"/>
</dbReference>
<dbReference type="InterPro" id="IPR002146">
    <property type="entry name" value="ATP_synth_b/b'su_bac/chlpt"/>
</dbReference>
<dbReference type="InterPro" id="IPR005864">
    <property type="entry name" value="ATP_synth_F0_bsu_bac"/>
</dbReference>
<dbReference type="InterPro" id="IPR050059">
    <property type="entry name" value="ATP_synthase_B_chain"/>
</dbReference>
<dbReference type="NCBIfam" id="TIGR01144">
    <property type="entry name" value="ATP_synt_b"/>
    <property type="match status" value="1"/>
</dbReference>
<dbReference type="NCBIfam" id="NF004411">
    <property type="entry name" value="PRK05759.1-2"/>
    <property type="match status" value="1"/>
</dbReference>
<dbReference type="PANTHER" id="PTHR33445:SF1">
    <property type="entry name" value="ATP SYNTHASE SUBUNIT B"/>
    <property type="match status" value="1"/>
</dbReference>
<dbReference type="PANTHER" id="PTHR33445">
    <property type="entry name" value="ATP SYNTHASE SUBUNIT B', CHLOROPLASTIC"/>
    <property type="match status" value="1"/>
</dbReference>
<dbReference type="Pfam" id="PF00430">
    <property type="entry name" value="ATP-synt_B"/>
    <property type="match status" value="1"/>
</dbReference>
<dbReference type="SUPFAM" id="SSF81573">
    <property type="entry name" value="F1F0 ATP synthase subunit B, membrane domain"/>
    <property type="match status" value="1"/>
</dbReference>
<organism>
    <name type="scientific">Albidiferax ferrireducens (strain ATCC BAA-621 / DSM 15236 / T118)</name>
    <name type="common">Rhodoferax ferrireducens</name>
    <dbReference type="NCBI Taxonomy" id="338969"/>
    <lineage>
        <taxon>Bacteria</taxon>
        <taxon>Pseudomonadati</taxon>
        <taxon>Pseudomonadota</taxon>
        <taxon>Betaproteobacteria</taxon>
        <taxon>Burkholderiales</taxon>
        <taxon>Comamonadaceae</taxon>
        <taxon>Rhodoferax</taxon>
    </lineage>
</organism>
<reference key="1">
    <citation type="submission" date="2006-02" db="EMBL/GenBank/DDBJ databases">
        <title>Complete sequence of chromosome of Rhodoferax ferrireducens DSM 15236.</title>
        <authorList>
            <person name="Copeland A."/>
            <person name="Lucas S."/>
            <person name="Lapidus A."/>
            <person name="Barry K."/>
            <person name="Detter J.C."/>
            <person name="Glavina del Rio T."/>
            <person name="Hammon N."/>
            <person name="Israni S."/>
            <person name="Pitluck S."/>
            <person name="Brettin T."/>
            <person name="Bruce D."/>
            <person name="Han C."/>
            <person name="Tapia R."/>
            <person name="Gilna P."/>
            <person name="Kiss H."/>
            <person name="Schmutz J."/>
            <person name="Larimer F."/>
            <person name="Land M."/>
            <person name="Kyrpides N."/>
            <person name="Ivanova N."/>
            <person name="Richardson P."/>
        </authorList>
    </citation>
    <scope>NUCLEOTIDE SEQUENCE [LARGE SCALE GENOMIC DNA]</scope>
    <source>
        <strain>ATCC BAA-621 / DSM 15236 / T118</strain>
    </source>
</reference>
<proteinExistence type="inferred from homology"/>
<keyword id="KW-0066">ATP synthesis</keyword>
<keyword id="KW-0997">Cell inner membrane</keyword>
<keyword id="KW-1003">Cell membrane</keyword>
<keyword id="KW-0138">CF(0)</keyword>
<keyword id="KW-0375">Hydrogen ion transport</keyword>
<keyword id="KW-0406">Ion transport</keyword>
<keyword id="KW-0472">Membrane</keyword>
<keyword id="KW-1185">Reference proteome</keyword>
<keyword id="KW-0812">Transmembrane</keyword>
<keyword id="KW-1133">Transmembrane helix</keyword>
<keyword id="KW-0813">Transport</keyword>
<sequence length="156" mass="17081">MNINSTLFLQAIVFAILVWFTMKFVWPPITKALDERAQKIADGLAAADKAKSELSSANKRVEAELALSRTETTARLADADRRGQSIVEEAKSKATEEANKIIAAAKVEAEQQSNKAREVLREQVAALAVKGAEQILRKEVNASVHADLLGRLKLEL</sequence>
<protein>
    <recommendedName>
        <fullName evidence="1">ATP synthase subunit b 1</fullName>
    </recommendedName>
    <alternativeName>
        <fullName evidence="1">ATP synthase F(0) sector subunit b 1</fullName>
    </alternativeName>
    <alternativeName>
        <fullName evidence="1">ATPase subunit I 1</fullName>
    </alternativeName>
    <alternativeName>
        <fullName evidence="1">F-type ATPase subunit b 1</fullName>
        <shortName evidence="1">F-ATPase subunit b 1</shortName>
    </alternativeName>
</protein>
<comment type="function">
    <text evidence="1">F(1)F(0) ATP synthase produces ATP from ADP in the presence of a proton or sodium gradient. F-type ATPases consist of two structural domains, F(1) containing the extramembraneous catalytic core and F(0) containing the membrane proton channel, linked together by a central stalk and a peripheral stalk. During catalysis, ATP synthesis in the catalytic domain of F(1) is coupled via a rotary mechanism of the central stalk subunits to proton translocation.</text>
</comment>
<comment type="function">
    <text evidence="1">Component of the F(0) channel, it forms part of the peripheral stalk, linking F(1) to F(0).</text>
</comment>
<comment type="subunit">
    <text evidence="1">F-type ATPases have 2 components, F(1) - the catalytic core - and F(0) - the membrane proton channel. F(1) has five subunits: alpha(3), beta(3), gamma(1), delta(1), epsilon(1). F(0) has three main subunits: a(1), b(2) and c(10-14). The alpha and beta chains form an alternating ring which encloses part of the gamma chain. F(1) is attached to F(0) by a central stalk formed by the gamma and epsilon chains, while a peripheral stalk is formed by the delta and b chains.</text>
</comment>
<comment type="subcellular location">
    <subcellularLocation>
        <location evidence="1">Cell inner membrane</location>
        <topology evidence="1">Single-pass membrane protein</topology>
    </subcellularLocation>
</comment>
<comment type="similarity">
    <text evidence="1">Belongs to the ATPase B chain family.</text>
</comment>
<evidence type="ECO:0000255" key="1">
    <source>
        <dbReference type="HAMAP-Rule" id="MF_01398"/>
    </source>
</evidence>